<comment type="function">
    <text evidence="1">Single strand-specific metallo-endoribonuclease involved in late-stage 70S ribosome quality control and in maturation of the 3' terminus of the 16S rRNA.</text>
</comment>
<comment type="cofactor">
    <cofactor evidence="1">
        <name>Zn(2+)</name>
        <dbReference type="ChEBI" id="CHEBI:29105"/>
    </cofactor>
    <text evidence="1">Binds 1 zinc ion.</text>
</comment>
<comment type="subcellular location">
    <subcellularLocation>
        <location evidence="1">Cytoplasm</location>
    </subcellularLocation>
</comment>
<comment type="similarity">
    <text evidence="1">Belongs to the endoribonuclease YbeY family.</text>
</comment>
<feature type="chain" id="PRO_0000284184" description="Endoribonuclease YbeY">
    <location>
        <begin position="1"/>
        <end position="158"/>
    </location>
</feature>
<feature type="binding site" evidence="1">
    <location>
        <position position="119"/>
    </location>
    <ligand>
        <name>Zn(2+)</name>
        <dbReference type="ChEBI" id="CHEBI:29105"/>
        <note>catalytic</note>
    </ligand>
</feature>
<feature type="binding site" evidence="1">
    <location>
        <position position="123"/>
    </location>
    <ligand>
        <name>Zn(2+)</name>
        <dbReference type="ChEBI" id="CHEBI:29105"/>
        <note>catalytic</note>
    </ligand>
</feature>
<feature type="binding site" evidence="1">
    <location>
        <position position="129"/>
    </location>
    <ligand>
        <name>Zn(2+)</name>
        <dbReference type="ChEBI" id="CHEBI:29105"/>
        <note>catalytic</note>
    </ligand>
</feature>
<protein>
    <recommendedName>
        <fullName evidence="1">Endoribonuclease YbeY</fullName>
        <ecNumber evidence="1">3.1.-.-</ecNumber>
    </recommendedName>
</protein>
<organism>
    <name type="scientific">Chlamydia felis (strain Fe/C-56)</name>
    <name type="common">Chlamydophila felis</name>
    <dbReference type="NCBI Taxonomy" id="264202"/>
    <lineage>
        <taxon>Bacteria</taxon>
        <taxon>Pseudomonadati</taxon>
        <taxon>Chlamydiota</taxon>
        <taxon>Chlamydiia</taxon>
        <taxon>Chlamydiales</taxon>
        <taxon>Chlamydiaceae</taxon>
        <taxon>Chlamydia/Chlamydophila group</taxon>
        <taxon>Chlamydia</taxon>
    </lineage>
</organism>
<gene>
    <name evidence="1" type="primary">ybeY</name>
    <name type="ordered locus">CF0771</name>
</gene>
<sequence length="158" mass="18172">MKKVPIKVCVSNKQKDVPIRVQSAKKLVLCCLQYWKITTDQVYIYFLDDKALAQIHDEVFSDPSLTDTITLPIDSPGISSHPHVLGEAFISPKAAIRFLKDRSQDSDLLYEEISRYVVHSLLHMLGYDDQTPEERKKMRVKENQALCMLREKHALLSD</sequence>
<keyword id="KW-0963">Cytoplasm</keyword>
<keyword id="KW-0255">Endonuclease</keyword>
<keyword id="KW-0378">Hydrolase</keyword>
<keyword id="KW-0479">Metal-binding</keyword>
<keyword id="KW-0540">Nuclease</keyword>
<keyword id="KW-0690">Ribosome biogenesis</keyword>
<keyword id="KW-0698">rRNA processing</keyword>
<keyword id="KW-0862">Zinc</keyword>
<dbReference type="EC" id="3.1.-.-" evidence="1"/>
<dbReference type="EMBL" id="AP006861">
    <property type="protein sequence ID" value="BAE81543.1"/>
    <property type="molecule type" value="Genomic_DNA"/>
</dbReference>
<dbReference type="RefSeq" id="WP_011458321.1">
    <property type="nucleotide sequence ID" value="NC_007899.1"/>
</dbReference>
<dbReference type="SMR" id="Q253J5"/>
<dbReference type="STRING" id="264202.gene:10544599"/>
<dbReference type="KEGG" id="cfe:BAE81543.1"/>
<dbReference type="eggNOG" id="COG0319">
    <property type="taxonomic scope" value="Bacteria"/>
</dbReference>
<dbReference type="HOGENOM" id="CLU_106710_2_0_0"/>
<dbReference type="OrthoDB" id="9807740at2"/>
<dbReference type="Proteomes" id="UP000001260">
    <property type="component" value="Chromosome"/>
</dbReference>
<dbReference type="GO" id="GO:0005737">
    <property type="term" value="C:cytoplasm"/>
    <property type="evidence" value="ECO:0007669"/>
    <property type="project" value="UniProtKB-SubCell"/>
</dbReference>
<dbReference type="GO" id="GO:0004222">
    <property type="term" value="F:metalloendopeptidase activity"/>
    <property type="evidence" value="ECO:0007669"/>
    <property type="project" value="InterPro"/>
</dbReference>
<dbReference type="GO" id="GO:0004521">
    <property type="term" value="F:RNA endonuclease activity"/>
    <property type="evidence" value="ECO:0007669"/>
    <property type="project" value="UniProtKB-UniRule"/>
</dbReference>
<dbReference type="GO" id="GO:0008270">
    <property type="term" value="F:zinc ion binding"/>
    <property type="evidence" value="ECO:0007669"/>
    <property type="project" value="UniProtKB-UniRule"/>
</dbReference>
<dbReference type="GO" id="GO:0006364">
    <property type="term" value="P:rRNA processing"/>
    <property type="evidence" value="ECO:0007669"/>
    <property type="project" value="UniProtKB-UniRule"/>
</dbReference>
<dbReference type="Gene3D" id="3.40.390.30">
    <property type="entry name" value="Metalloproteases ('zincins'), catalytic domain"/>
    <property type="match status" value="1"/>
</dbReference>
<dbReference type="HAMAP" id="MF_00009">
    <property type="entry name" value="Endoribonucl_YbeY"/>
    <property type="match status" value="1"/>
</dbReference>
<dbReference type="InterPro" id="IPR023091">
    <property type="entry name" value="MetalPrtase_cat_dom_sf_prd"/>
</dbReference>
<dbReference type="InterPro" id="IPR002036">
    <property type="entry name" value="YbeY"/>
</dbReference>
<dbReference type="NCBIfam" id="TIGR00043">
    <property type="entry name" value="rRNA maturation RNase YbeY"/>
    <property type="match status" value="1"/>
</dbReference>
<dbReference type="Pfam" id="PF02130">
    <property type="entry name" value="YbeY"/>
    <property type="match status" value="1"/>
</dbReference>
<dbReference type="SUPFAM" id="SSF55486">
    <property type="entry name" value="Metalloproteases ('zincins'), catalytic domain"/>
    <property type="match status" value="1"/>
</dbReference>
<accession>Q253J5</accession>
<proteinExistence type="inferred from homology"/>
<reference key="1">
    <citation type="journal article" date="2006" name="DNA Res.">
        <title>Genome sequence of the cat pathogen, Chlamydophila felis.</title>
        <authorList>
            <person name="Azuma Y."/>
            <person name="Hirakawa H."/>
            <person name="Yamashita A."/>
            <person name="Cai Y."/>
            <person name="Rahman M.A."/>
            <person name="Suzuki H."/>
            <person name="Mitaku S."/>
            <person name="Toh H."/>
            <person name="Goto S."/>
            <person name="Murakami T."/>
            <person name="Sugi K."/>
            <person name="Hayashi H."/>
            <person name="Fukushi H."/>
            <person name="Hattori M."/>
            <person name="Kuhara S."/>
            <person name="Shirai M."/>
        </authorList>
    </citation>
    <scope>NUCLEOTIDE SEQUENCE [LARGE SCALE GENOMIC DNA]</scope>
    <source>
        <strain>Fe/C-56</strain>
    </source>
</reference>
<evidence type="ECO:0000255" key="1">
    <source>
        <dbReference type="HAMAP-Rule" id="MF_00009"/>
    </source>
</evidence>
<name>YBEY_CHLFF</name>